<feature type="chain" id="PRO_1000053384" description="Phosphatidylglycerol--prolipoprotein diacylglyceryl transferase">
    <location>
        <begin position="1"/>
        <end position="274"/>
    </location>
</feature>
<feature type="transmembrane region" description="Helical" evidence="1">
    <location>
        <begin position="22"/>
        <end position="42"/>
    </location>
</feature>
<feature type="transmembrane region" description="Helical" evidence="1">
    <location>
        <begin position="61"/>
        <end position="81"/>
    </location>
</feature>
<feature type="transmembrane region" description="Helical" evidence="1">
    <location>
        <begin position="96"/>
        <end position="116"/>
    </location>
</feature>
<feature type="transmembrane region" description="Helical" evidence="1">
    <location>
        <begin position="125"/>
        <end position="145"/>
    </location>
</feature>
<feature type="transmembrane region" description="Helical" evidence="1">
    <location>
        <begin position="177"/>
        <end position="197"/>
    </location>
</feature>
<feature type="transmembrane region" description="Helical" evidence="1">
    <location>
        <begin position="204"/>
        <end position="224"/>
    </location>
</feature>
<feature type="transmembrane region" description="Helical" evidence="1">
    <location>
        <begin position="238"/>
        <end position="258"/>
    </location>
</feature>
<feature type="binding site" evidence="1">
    <location>
        <position position="144"/>
    </location>
    <ligand>
        <name>a 1,2-diacyl-sn-glycero-3-phospho-(1'-sn-glycerol)</name>
        <dbReference type="ChEBI" id="CHEBI:64716"/>
    </ligand>
</feature>
<name>LGT_AERHH</name>
<evidence type="ECO:0000255" key="1">
    <source>
        <dbReference type="HAMAP-Rule" id="MF_01147"/>
    </source>
</evidence>
<protein>
    <recommendedName>
        <fullName evidence="1">Phosphatidylglycerol--prolipoprotein diacylglyceryl transferase</fullName>
        <ecNumber evidence="1">2.5.1.145</ecNumber>
    </recommendedName>
</protein>
<comment type="function">
    <text evidence="1">Catalyzes the transfer of the diacylglyceryl group from phosphatidylglycerol to the sulfhydryl group of the N-terminal cysteine of a prolipoprotein, the first step in the formation of mature lipoproteins.</text>
</comment>
<comment type="catalytic activity">
    <reaction evidence="1">
        <text>L-cysteinyl-[prolipoprotein] + a 1,2-diacyl-sn-glycero-3-phospho-(1'-sn-glycerol) = an S-1,2-diacyl-sn-glyceryl-L-cysteinyl-[prolipoprotein] + sn-glycerol 1-phosphate + H(+)</text>
        <dbReference type="Rhea" id="RHEA:56712"/>
        <dbReference type="Rhea" id="RHEA-COMP:14679"/>
        <dbReference type="Rhea" id="RHEA-COMP:14680"/>
        <dbReference type="ChEBI" id="CHEBI:15378"/>
        <dbReference type="ChEBI" id="CHEBI:29950"/>
        <dbReference type="ChEBI" id="CHEBI:57685"/>
        <dbReference type="ChEBI" id="CHEBI:64716"/>
        <dbReference type="ChEBI" id="CHEBI:140658"/>
        <dbReference type="EC" id="2.5.1.145"/>
    </reaction>
</comment>
<comment type="pathway">
    <text evidence="1">Protein modification; lipoprotein biosynthesis (diacylglyceryl transfer).</text>
</comment>
<comment type="subcellular location">
    <subcellularLocation>
        <location evidence="1">Cell inner membrane</location>
        <topology evidence="1">Multi-pass membrane protein</topology>
    </subcellularLocation>
</comment>
<comment type="similarity">
    <text evidence="1">Belongs to the Lgt family.</text>
</comment>
<proteinExistence type="inferred from homology"/>
<keyword id="KW-0997">Cell inner membrane</keyword>
<keyword id="KW-1003">Cell membrane</keyword>
<keyword id="KW-0472">Membrane</keyword>
<keyword id="KW-1185">Reference proteome</keyword>
<keyword id="KW-0808">Transferase</keyword>
<keyword id="KW-0812">Transmembrane</keyword>
<keyword id="KW-1133">Transmembrane helix</keyword>
<reference key="1">
    <citation type="journal article" date="2006" name="J. Bacteriol.">
        <title>Genome sequence of Aeromonas hydrophila ATCC 7966T: jack of all trades.</title>
        <authorList>
            <person name="Seshadri R."/>
            <person name="Joseph S.W."/>
            <person name="Chopra A.K."/>
            <person name="Sha J."/>
            <person name="Shaw J."/>
            <person name="Graf J."/>
            <person name="Haft D.H."/>
            <person name="Wu M."/>
            <person name="Ren Q."/>
            <person name="Rosovitz M.J."/>
            <person name="Madupu R."/>
            <person name="Tallon L."/>
            <person name="Kim M."/>
            <person name="Jin S."/>
            <person name="Vuong H."/>
            <person name="Stine O.C."/>
            <person name="Ali A."/>
            <person name="Horneman A.J."/>
            <person name="Heidelberg J.F."/>
        </authorList>
    </citation>
    <scope>NUCLEOTIDE SEQUENCE [LARGE SCALE GENOMIC DNA]</scope>
    <source>
        <strain>ATCC 7966 / DSM 30187 / BCRC 13018 / CCUG 14551 / JCM 1027 / KCTC 2358 / NCIMB 9240 / NCTC 8049</strain>
    </source>
</reference>
<gene>
    <name evidence="1" type="primary">lgt</name>
    <name type="ordered locus">AHA_0674</name>
</gene>
<dbReference type="EC" id="2.5.1.145" evidence="1"/>
<dbReference type="EMBL" id="CP000462">
    <property type="protein sequence ID" value="ABK38606.1"/>
    <property type="molecule type" value="Genomic_DNA"/>
</dbReference>
<dbReference type="RefSeq" id="WP_011704636.1">
    <property type="nucleotide sequence ID" value="NC_008570.1"/>
</dbReference>
<dbReference type="RefSeq" id="YP_855216.1">
    <property type="nucleotide sequence ID" value="NC_008570.1"/>
</dbReference>
<dbReference type="SMR" id="A0KG31"/>
<dbReference type="STRING" id="380703.AHA_0674"/>
<dbReference type="EnsemblBacteria" id="ABK38606">
    <property type="protein sequence ID" value="ABK38606"/>
    <property type="gene ID" value="AHA_0674"/>
</dbReference>
<dbReference type="GeneID" id="4490681"/>
<dbReference type="KEGG" id="aha:AHA_0674"/>
<dbReference type="PATRIC" id="fig|380703.7.peg.675"/>
<dbReference type="eggNOG" id="COG0682">
    <property type="taxonomic scope" value="Bacteria"/>
</dbReference>
<dbReference type="HOGENOM" id="CLU_013386_1_0_6"/>
<dbReference type="OrthoDB" id="871140at2"/>
<dbReference type="UniPathway" id="UPA00664"/>
<dbReference type="Proteomes" id="UP000000756">
    <property type="component" value="Chromosome"/>
</dbReference>
<dbReference type="GO" id="GO:0005886">
    <property type="term" value="C:plasma membrane"/>
    <property type="evidence" value="ECO:0007669"/>
    <property type="project" value="UniProtKB-SubCell"/>
</dbReference>
<dbReference type="GO" id="GO:0008961">
    <property type="term" value="F:phosphatidylglycerol-prolipoprotein diacylglyceryl transferase activity"/>
    <property type="evidence" value="ECO:0007669"/>
    <property type="project" value="UniProtKB-UniRule"/>
</dbReference>
<dbReference type="GO" id="GO:0042158">
    <property type="term" value="P:lipoprotein biosynthetic process"/>
    <property type="evidence" value="ECO:0007669"/>
    <property type="project" value="UniProtKB-UniRule"/>
</dbReference>
<dbReference type="HAMAP" id="MF_01147">
    <property type="entry name" value="Lgt"/>
    <property type="match status" value="1"/>
</dbReference>
<dbReference type="InterPro" id="IPR001640">
    <property type="entry name" value="Lgt"/>
</dbReference>
<dbReference type="NCBIfam" id="TIGR00544">
    <property type="entry name" value="lgt"/>
    <property type="match status" value="1"/>
</dbReference>
<dbReference type="PANTHER" id="PTHR30589:SF0">
    <property type="entry name" value="PHOSPHATIDYLGLYCEROL--PROLIPOPROTEIN DIACYLGLYCERYL TRANSFERASE"/>
    <property type="match status" value="1"/>
</dbReference>
<dbReference type="PANTHER" id="PTHR30589">
    <property type="entry name" value="PROLIPOPROTEIN DIACYLGLYCERYL TRANSFERASE"/>
    <property type="match status" value="1"/>
</dbReference>
<dbReference type="Pfam" id="PF01790">
    <property type="entry name" value="LGT"/>
    <property type="match status" value="1"/>
</dbReference>
<dbReference type="PROSITE" id="PS01311">
    <property type="entry name" value="LGT"/>
    <property type="match status" value="1"/>
</dbReference>
<accession>A0KG31</accession>
<organism>
    <name type="scientific">Aeromonas hydrophila subsp. hydrophila (strain ATCC 7966 / DSM 30187 / BCRC 13018 / CCUG 14551 / JCM 1027 / KCTC 2358 / NCIMB 9240 / NCTC 8049)</name>
    <dbReference type="NCBI Taxonomy" id="380703"/>
    <lineage>
        <taxon>Bacteria</taxon>
        <taxon>Pseudomonadati</taxon>
        <taxon>Pseudomonadota</taxon>
        <taxon>Gammaproteobacteria</taxon>
        <taxon>Aeromonadales</taxon>
        <taxon>Aeromonadaceae</taxon>
        <taxon>Aeromonas</taxon>
    </lineage>
</organism>
<sequence length="274" mass="31141">MQHDGYWVFSQIDPVAFSLGPLSVRWYGLMYLFGFAFAMWLAGRRADAPNSGWTRNEVSDLLFYGFLGVILGGRVGYVLFYNFDMFLADPLYLFKIWTGGMSFHGGLIGVITAMVWFAHKTNRHFFTVADFVAPLIPFGLGVGRIGNFLNGELWGRVTDVPWAIIFPEAGPEPRHPSQLYQFALEGVVLFIILNLFWRKNPPRGAISGMFLLFYGLFRFLVEFVRQPDSQLGLYFQEISMGQILSTPMIIIGALMIWVAYKRPQLFGNSVKEAK</sequence>